<sequence>MKRTYQPSKIVRKRRHGFRARMASKSGRAIINNRRRKGRHVLCA</sequence>
<reference key="1">
    <citation type="journal article" date="2006" name="PLoS Genet.">
        <title>Comparative genomics of emerging human ehrlichiosis agents.</title>
        <authorList>
            <person name="Dunning Hotopp J.C."/>
            <person name="Lin M."/>
            <person name="Madupu R."/>
            <person name="Crabtree J."/>
            <person name="Angiuoli S.V."/>
            <person name="Eisen J.A."/>
            <person name="Seshadri R."/>
            <person name="Ren Q."/>
            <person name="Wu M."/>
            <person name="Utterback T.R."/>
            <person name="Smith S."/>
            <person name="Lewis M."/>
            <person name="Khouri H."/>
            <person name="Zhang C."/>
            <person name="Niu H."/>
            <person name="Lin Q."/>
            <person name="Ohashi N."/>
            <person name="Zhi N."/>
            <person name="Nelson W.C."/>
            <person name="Brinkac L.M."/>
            <person name="Dodson R.J."/>
            <person name="Rosovitz M.J."/>
            <person name="Sundaram J.P."/>
            <person name="Daugherty S.C."/>
            <person name="Davidsen T."/>
            <person name="Durkin A.S."/>
            <person name="Gwinn M.L."/>
            <person name="Haft D.H."/>
            <person name="Selengut J.D."/>
            <person name="Sullivan S.A."/>
            <person name="Zafar N."/>
            <person name="Zhou L."/>
            <person name="Benahmed F."/>
            <person name="Forberger H."/>
            <person name="Halpin R."/>
            <person name="Mulligan S."/>
            <person name="Robinson J."/>
            <person name="White O."/>
            <person name="Rikihisa Y."/>
            <person name="Tettelin H."/>
        </authorList>
    </citation>
    <scope>NUCLEOTIDE SEQUENCE [LARGE SCALE GENOMIC DNA]</scope>
    <source>
        <strain>ATCC VR-367 / Miyayama</strain>
    </source>
</reference>
<comment type="similarity">
    <text evidence="1">Belongs to the bacterial ribosomal protein bL34 family.</text>
</comment>
<protein>
    <recommendedName>
        <fullName evidence="1">Large ribosomal subunit protein bL34</fullName>
    </recommendedName>
    <alternativeName>
        <fullName evidence="2">50S ribosomal protein L34</fullName>
    </alternativeName>
</protein>
<feature type="chain" id="PRO_1000013384" description="Large ribosomal subunit protein bL34">
    <location>
        <begin position="1"/>
        <end position="44"/>
    </location>
</feature>
<accession>Q2GCS3</accession>
<name>RL34_NEOSM</name>
<dbReference type="EMBL" id="CP000237">
    <property type="protein sequence ID" value="ABD46038.1"/>
    <property type="molecule type" value="Genomic_DNA"/>
</dbReference>
<dbReference type="SMR" id="Q2GCS3"/>
<dbReference type="STRING" id="222891.NSE_0856"/>
<dbReference type="KEGG" id="nse:NSE_0856"/>
<dbReference type="eggNOG" id="COG0230">
    <property type="taxonomic scope" value="Bacteria"/>
</dbReference>
<dbReference type="HOGENOM" id="CLU_129938_2_0_5"/>
<dbReference type="OrthoDB" id="9804164at2"/>
<dbReference type="Proteomes" id="UP000001942">
    <property type="component" value="Chromosome"/>
</dbReference>
<dbReference type="GO" id="GO:1990904">
    <property type="term" value="C:ribonucleoprotein complex"/>
    <property type="evidence" value="ECO:0007669"/>
    <property type="project" value="UniProtKB-KW"/>
</dbReference>
<dbReference type="GO" id="GO:0005840">
    <property type="term" value="C:ribosome"/>
    <property type="evidence" value="ECO:0007669"/>
    <property type="project" value="UniProtKB-KW"/>
</dbReference>
<dbReference type="GO" id="GO:0003735">
    <property type="term" value="F:structural constituent of ribosome"/>
    <property type="evidence" value="ECO:0007669"/>
    <property type="project" value="InterPro"/>
</dbReference>
<dbReference type="GO" id="GO:0006412">
    <property type="term" value="P:translation"/>
    <property type="evidence" value="ECO:0007669"/>
    <property type="project" value="UniProtKB-UniRule"/>
</dbReference>
<dbReference type="FunFam" id="1.10.287.3980:FF:000001">
    <property type="entry name" value="Mitochondrial ribosomal protein L34"/>
    <property type="match status" value="1"/>
</dbReference>
<dbReference type="Gene3D" id="1.10.287.3980">
    <property type="match status" value="1"/>
</dbReference>
<dbReference type="HAMAP" id="MF_00391">
    <property type="entry name" value="Ribosomal_bL34"/>
    <property type="match status" value="1"/>
</dbReference>
<dbReference type="InterPro" id="IPR000271">
    <property type="entry name" value="Ribosomal_bL34"/>
</dbReference>
<dbReference type="InterPro" id="IPR020939">
    <property type="entry name" value="Ribosomal_bL34_CS"/>
</dbReference>
<dbReference type="NCBIfam" id="TIGR01030">
    <property type="entry name" value="rpmH_bact"/>
    <property type="match status" value="1"/>
</dbReference>
<dbReference type="PANTHER" id="PTHR14503:SF4">
    <property type="entry name" value="LARGE RIBOSOMAL SUBUNIT PROTEIN BL34M"/>
    <property type="match status" value="1"/>
</dbReference>
<dbReference type="PANTHER" id="PTHR14503">
    <property type="entry name" value="MITOCHONDRIAL RIBOSOMAL PROTEIN 34 FAMILY MEMBER"/>
    <property type="match status" value="1"/>
</dbReference>
<dbReference type="Pfam" id="PF00468">
    <property type="entry name" value="Ribosomal_L34"/>
    <property type="match status" value="1"/>
</dbReference>
<dbReference type="PROSITE" id="PS00784">
    <property type="entry name" value="RIBOSOMAL_L34"/>
    <property type="match status" value="1"/>
</dbReference>
<organism>
    <name type="scientific">Neorickettsia sennetsu (strain ATCC VR-367 / Miyayama)</name>
    <name type="common">Ehrlichia sennetsu</name>
    <dbReference type="NCBI Taxonomy" id="222891"/>
    <lineage>
        <taxon>Bacteria</taxon>
        <taxon>Pseudomonadati</taxon>
        <taxon>Pseudomonadota</taxon>
        <taxon>Alphaproteobacteria</taxon>
        <taxon>Rickettsiales</taxon>
        <taxon>Anaplasmataceae</taxon>
        <taxon>Neorickettsia</taxon>
    </lineage>
</organism>
<proteinExistence type="inferred from homology"/>
<keyword id="KW-0687">Ribonucleoprotein</keyword>
<keyword id="KW-0689">Ribosomal protein</keyword>
<evidence type="ECO:0000255" key="1">
    <source>
        <dbReference type="HAMAP-Rule" id="MF_00391"/>
    </source>
</evidence>
<evidence type="ECO:0000305" key="2"/>
<gene>
    <name evidence="1" type="primary">rpmH</name>
    <name type="ordered locus">NSE_0856</name>
</gene>